<organism>
    <name type="scientific">Burkholderia ambifaria (strain MC40-6)</name>
    <dbReference type="NCBI Taxonomy" id="398577"/>
    <lineage>
        <taxon>Bacteria</taxon>
        <taxon>Pseudomonadati</taxon>
        <taxon>Pseudomonadota</taxon>
        <taxon>Betaproteobacteria</taxon>
        <taxon>Burkholderiales</taxon>
        <taxon>Burkholderiaceae</taxon>
        <taxon>Burkholderia</taxon>
        <taxon>Burkholderia cepacia complex</taxon>
    </lineage>
</organism>
<evidence type="ECO:0000255" key="1">
    <source>
        <dbReference type="HAMAP-Rule" id="MF_00141"/>
    </source>
</evidence>
<comment type="function">
    <text evidence="1">Involved in peptide bond synthesis. Stimulates efficient translation and peptide-bond synthesis on native or reconstituted 70S ribosomes in vitro. Probably functions indirectly by altering the affinity of the ribosome for aminoacyl-tRNA, thus increasing their reactivity as acceptors for peptidyl transferase.</text>
</comment>
<comment type="pathway">
    <text evidence="1">Protein biosynthesis; polypeptide chain elongation.</text>
</comment>
<comment type="subcellular location">
    <subcellularLocation>
        <location evidence="1">Cytoplasm</location>
    </subcellularLocation>
</comment>
<comment type="similarity">
    <text evidence="1">Belongs to the elongation factor P family.</text>
</comment>
<reference key="1">
    <citation type="submission" date="2008-04" db="EMBL/GenBank/DDBJ databases">
        <title>Complete sequence of chromosome 1 of Burkholderia ambifaria MC40-6.</title>
        <authorList>
            <person name="Copeland A."/>
            <person name="Lucas S."/>
            <person name="Lapidus A."/>
            <person name="Glavina del Rio T."/>
            <person name="Dalin E."/>
            <person name="Tice H."/>
            <person name="Pitluck S."/>
            <person name="Chain P."/>
            <person name="Malfatti S."/>
            <person name="Shin M."/>
            <person name="Vergez L."/>
            <person name="Lang D."/>
            <person name="Schmutz J."/>
            <person name="Larimer F."/>
            <person name="Land M."/>
            <person name="Hauser L."/>
            <person name="Kyrpides N."/>
            <person name="Lykidis A."/>
            <person name="Ramette A."/>
            <person name="Konstantinidis K."/>
            <person name="Tiedje J."/>
            <person name="Richardson P."/>
        </authorList>
    </citation>
    <scope>NUCLEOTIDE SEQUENCE [LARGE SCALE GENOMIC DNA]</scope>
    <source>
        <strain>MC40-6</strain>
    </source>
</reference>
<sequence length="185" mass="20841">MKTAQELRVGNVVQIGSDAWVIAKTEYNKSGRNAAVVKMKMKNLLTNAGQESVYKADDKFDVVMLDRKEVTYSYFADPMYVFMDADYNQYEVEAEMMGEALNYLEDGMACEVVFYNEKAISVELPTILVREITYTEPAVKGDTSSGKVLKNAKLATGFELQVPLFCSTGDKIEIDTRTNEYRSRA</sequence>
<gene>
    <name evidence="1" type="primary">efp</name>
    <name type="ordered locus">BamMC406_1021</name>
</gene>
<protein>
    <recommendedName>
        <fullName evidence="1">Elongation factor P</fullName>
        <shortName evidence="1">EF-P</shortName>
    </recommendedName>
</protein>
<feature type="chain" id="PRO_1000096128" description="Elongation factor P">
    <location>
        <begin position="1"/>
        <end position="185"/>
    </location>
</feature>
<name>EFP_BURA4</name>
<accession>B1YVN1</accession>
<dbReference type="EMBL" id="CP001025">
    <property type="protein sequence ID" value="ACB63512.1"/>
    <property type="molecule type" value="Genomic_DNA"/>
</dbReference>
<dbReference type="RefSeq" id="WP_006751871.1">
    <property type="nucleotide sequence ID" value="NC_010551.1"/>
</dbReference>
<dbReference type="SMR" id="B1YVN1"/>
<dbReference type="GeneID" id="93083576"/>
<dbReference type="KEGG" id="bac:BamMC406_1021"/>
<dbReference type="HOGENOM" id="CLU_074944_2_1_4"/>
<dbReference type="OrthoDB" id="9801844at2"/>
<dbReference type="UniPathway" id="UPA00345"/>
<dbReference type="Proteomes" id="UP000001680">
    <property type="component" value="Chromosome 1"/>
</dbReference>
<dbReference type="GO" id="GO:0005737">
    <property type="term" value="C:cytoplasm"/>
    <property type="evidence" value="ECO:0007669"/>
    <property type="project" value="UniProtKB-SubCell"/>
</dbReference>
<dbReference type="GO" id="GO:0003746">
    <property type="term" value="F:translation elongation factor activity"/>
    <property type="evidence" value="ECO:0007669"/>
    <property type="project" value="UniProtKB-UniRule"/>
</dbReference>
<dbReference type="GO" id="GO:0043043">
    <property type="term" value="P:peptide biosynthetic process"/>
    <property type="evidence" value="ECO:0007669"/>
    <property type="project" value="InterPro"/>
</dbReference>
<dbReference type="CDD" id="cd04470">
    <property type="entry name" value="S1_EF-P_repeat_1"/>
    <property type="match status" value="1"/>
</dbReference>
<dbReference type="CDD" id="cd05794">
    <property type="entry name" value="S1_EF-P_repeat_2"/>
    <property type="match status" value="1"/>
</dbReference>
<dbReference type="FunFam" id="2.30.30.30:FF:000003">
    <property type="entry name" value="Elongation factor P"/>
    <property type="match status" value="1"/>
</dbReference>
<dbReference type="FunFam" id="2.40.50.140:FF:000004">
    <property type="entry name" value="Elongation factor P"/>
    <property type="match status" value="1"/>
</dbReference>
<dbReference type="FunFam" id="2.40.50.140:FF:000009">
    <property type="entry name" value="Elongation factor P"/>
    <property type="match status" value="1"/>
</dbReference>
<dbReference type="Gene3D" id="2.30.30.30">
    <property type="match status" value="1"/>
</dbReference>
<dbReference type="Gene3D" id="2.40.50.140">
    <property type="entry name" value="Nucleic acid-binding proteins"/>
    <property type="match status" value="2"/>
</dbReference>
<dbReference type="HAMAP" id="MF_00141">
    <property type="entry name" value="EF_P"/>
    <property type="match status" value="1"/>
</dbReference>
<dbReference type="InterPro" id="IPR015365">
    <property type="entry name" value="Elong-fact-P_C"/>
</dbReference>
<dbReference type="InterPro" id="IPR012340">
    <property type="entry name" value="NA-bd_OB-fold"/>
</dbReference>
<dbReference type="InterPro" id="IPR014722">
    <property type="entry name" value="Rib_uL2_dom2"/>
</dbReference>
<dbReference type="InterPro" id="IPR020599">
    <property type="entry name" value="Transl_elong_fac_P/YeiP"/>
</dbReference>
<dbReference type="InterPro" id="IPR013185">
    <property type="entry name" value="Transl_elong_KOW-like"/>
</dbReference>
<dbReference type="InterPro" id="IPR001059">
    <property type="entry name" value="Transl_elong_P/YeiP_cen"/>
</dbReference>
<dbReference type="InterPro" id="IPR013852">
    <property type="entry name" value="Transl_elong_P/YeiP_CS"/>
</dbReference>
<dbReference type="InterPro" id="IPR011768">
    <property type="entry name" value="Transl_elongation_fac_P"/>
</dbReference>
<dbReference type="InterPro" id="IPR008991">
    <property type="entry name" value="Translation_prot_SH3-like_sf"/>
</dbReference>
<dbReference type="NCBIfam" id="TIGR00038">
    <property type="entry name" value="efp"/>
    <property type="match status" value="1"/>
</dbReference>
<dbReference type="NCBIfam" id="NF001810">
    <property type="entry name" value="PRK00529.1"/>
    <property type="match status" value="1"/>
</dbReference>
<dbReference type="PANTHER" id="PTHR30053">
    <property type="entry name" value="ELONGATION FACTOR P"/>
    <property type="match status" value="1"/>
</dbReference>
<dbReference type="PANTHER" id="PTHR30053:SF12">
    <property type="entry name" value="ELONGATION FACTOR P (EF-P) FAMILY PROTEIN"/>
    <property type="match status" value="1"/>
</dbReference>
<dbReference type="Pfam" id="PF01132">
    <property type="entry name" value="EFP"/>
    <property type="match status" value="1"/>
</dbReference>
<dbReference type="Pfam" id="PF08207">
    <property type="entry name" value="EFP_N"/>
    <property type="match status" value="1"/>
</dbReference>
<dbReference type="Pfam" id="PF09285">
    <property type="entry name" value="Elong-fact-P_C"/>
    <property type="match status" value="1"/>
</dbReference>
<dbReference type="PIRSF" id="PIRSF005901">
    <property type="entry name" value="EF-P"/>
    <property type="match status" value="1"/>
</dbReference>
<dbReference type="SMART" id="SM01185">
    <property type="entry name" value="EFP"/>
    <property type="match status" value="1"/>
</dbReference>
<dbReference type="SMART" id="SM00841">
    <property type="entry name" value="Elong-fact-P_C"/>
    <property type="match status" value="1"/>
</dbReference>
<dbReference type="SUPFAM" id="SSF50249">
    <property type="entry name" value="Nucleic acid-binding proteins"/>
    <property type="match status" value="2"/>
</dbReference>
<dbReference type="SUPFAM" id="SSF50104">
    <property type="entry name" value="Translation proteins SH3-like domain"/>
    <property type="match status" value="1"/>
</dbReference>
<dbReference type="PROSITE" id="PS01275">
    <property type="entry name" value="EFP"/>
    <property type="match status" value="1"/>
</dbReference>
<keyword id="KW-0963">Cytoplasm</keyword>
<keyword id="KW-0251">Elongation factor</keyword>
<keyword id="KW-0648">Protein biosynthesis</keyword>
<proteinExistence type="inferred from homology"/>